<keyword id="KW-1003">Cell membrane</keyword>
<keyword id="KW-0249">Electron transport</keyword>
<keyword id="KW-0349">Heme</keyword>
<keyword id="KW-0408">Iron</keyword>
<keyword id="KW-0472">Membrane</keyword>
<keyword id="KW-0479">Metal-binding</keyword>
<keyword id="KW-1185">Reference proteome</keyword>
<keyword id="KW-0679">Respiratory chain</keyword>
<keyword id="KW-0812">Transmembrane</keyword>
<keyword id="KW-1133">Transmembrane helix</keyword>
<keyword id="KW-0813">Transport</keyword>
<gene>
    <name type="primary">petB</name>
    <name type="synonym">cytB</name>
    <name type="ordered locus">RP271</name>
</gene>
<feature type="chain" id="PRO_0000061776" description="Cytochrome b">
    <location>
        <begin position="1"/>
        <end position="398"/>
    </location>
</feature>
<feature type="transmembrane region" description="Helical" evidence="2">
    <location>
        <begin position="45"/>
        <end position="65"/>
    </location>
</feature>
<feature type="transmembrane region" description="Helical" evidence="2">
    <location>
        <begin position="96"/>
        <end position="116"/>
    </location>
</feature>
<feature type="transmembrane region" description="Helical" evidence="2">
    <location>
        <begin position="129"/>
        <end position="149"/>
    </location>
</feature>
<feature type="transmembrane region" description="Helical" evidence="2">
    <location>
        <begin position="164"/>
        <end position="184"/>
    </location>
</feature>
<feature type="transmembrane region" description="Helical" evidence="2">
    <location>
        <begin position="192"/>
        <end position="212"/>
    </location>
</feature>
<feature type="transmembrane region" description="Helical" evidence="2">
    <location>
        <begin position="245"/>
        <end position="265"/>
    </location>
</feature>
<feature type="transmembrane region" description="Helical" evidence="2">
    <location>
        <begin position="277"/>
        <end position="297"/>
    </location>
</feature>
<feature type="transmembrane region" description="Helical" evidence="2">
    <location>
        <begin position="304"/>
        <end position="324"/>
    </location>
</feature>
<feature type="transmembrane region" description="Helical" evidence="2">
    <location>
        <begin position="339"/>
        <end position="359"/>
    </location>
</feature>
<feature type="transmembrane region" description="Helical" evidence="2">
    <location>
        <begin position="366"/>
        <end position="386"/>
    </location>
</feature>
<feature type="binding site" description="axial binding residue">
    <location>
        <position position="95"/>
    </location>
    <ligand>
        <name>heme b</name>
        <dbReference type="ChEBI" id="CHEBI:60344"/>
        <label>b562</label>
    </ligand>
    <ligandPart>
        <name>Fe</name>
        <dbReference type="ChEBI" id="CHEBI:18248"/>
    </ligandPart>
</feature>
<feature type="binding site" description="axial binding residue">
    <location>
        <position position="109"/>
    </location>
    <ligand>
        <name>heme b</name>
        <dbReference type="ChEBI" id="CHEBI:60344"/>
        <label>b566</label>
    </ligand>
    <ligandPart>
        <name>Fe</name>
        <dbReference type="ChEBI" id="CHEBI:18248"/>
    </ligandPart>
</feature>
<feature type="binding site" description="axial binding residue">
    <location>
        <position position="196"/>
    </location>
    <ligand>
        <name>heme b</name>
        <dbReference type="ChEBI" id="CHEBI:60344"/>
        <label>b562</label>
    </ligand>
    <ligandPart>
        <name>Fe</name>
        <dbReference type="ChEBI" id="CHEBI:18248"/>
    </ligandPart>
</feature>
<feature type="binding site" description="axial binding residue">
    <location>
        <position position="210"/>
    </location>
    <ligand>
        <name>heme b</name>
        <dbReference type="ChEBI" id="CHEBI:60344"/>
        <label>b566</label>
    </ligand>
    <ligandPart>
        <name>Fe</name>
        <dbReference type="ChEBI" id="CHEBI:18248"/>
    </ligandPart>
</feature>
<name>CYB_RICPR</name>
<dbReference type="EMBL" id="Y13854">
    <property type="protein sequence ID" value="CAA74166.1"/>
    <property type="molecule type" value="Genomic_DNA"/>
</dbReference>
<dbReference type="EMBL" id="AJ235271">
    <property type="protein sequence ID" value="CAA14733.1"/>
    <property type="molecule type" value="Genomic_DNA"/>
</dbReference>
<dbReference type="PIR" id="C71682">
    <property type="entry name" value="C71682"/>
</dbReference>
<dbReference type="RefSeq" id="NP_220656.1">
    <property type="nucleotide sequence ID" value="NC_000963.1"/>
</dbReference>
<dbReference type="RefSeq" id="WP_004599371.1">
    <property type="nucleotide sequence ID" value="NC_000963.1"/>
</dbReference>
<dbReference type="SMR" id="O54070"/>
<dbReference type="STRING" id="272947.gene:17555352"/>
<dbReference type="EnsemblBacteria" id="CAA14733">
    <property type="protein sequence ID" value="CAA14733"/>
    <property type="gene ID" value="CAA14733"/>
</dbReference>
<dbReference type="KEGG" id="rpr:RP271"/>
<dbReference type="PATRIC" id="fig|272947.5.peg.278"/>
<dbReference type="eggNOG" id="COG1290">
    <property type="taxonomic scope" value="Bacteria"/>
</dbReference>
<dbReference type="HOGENOM" id="CLU_031114_3_0_5"/>
<dbReference type="OrthoDB" id="9804503at2"/>
<dbReference type="Proteomes" id="UP000002480">
    <property type="component" value="Chromosome"/>
</dbReference>
<dbReference type="GO" id="GO:0005886">
    <property type="term" value="C:plasma membrane"/>
    <property type="evidence" value="ECO:0007669"/>
    <property type="project" value="UniProtKB-SubCell"/>
</dbReference>
<dbReference type="GO" id="GO:0045275">
    <property type="term" value="C:respiratory chain complex III"/>
    <property type="evidence" value="ECO:0007669"/>
    <property type="project" value="InterPro"/>
</dbReference>
<dbReference type="GO" id="GO:0046872">
    <property type="term" value="F:metal ion binding"/>
    <property type="evidence" value="ECO:0007669"/>
    <property type="project" value="UniProtKB-KW"/>
</dbReference>
<dbReference type="GO" id="GO:0008121">
    <property type="term" value="F:ubiquinol-cytochrome-c reductase activity"/>
    <property type="evidence" value="ECO:0007669"/>
    <property type="project" value="InterPro"/>
</dbReference>
<dbReference type="GO" id="GO:0022904">
    <property type="term" value="P:respiratory electron transport chain"/>
    <property type="evidence" value="ECO:0007669"/>
    <property type="project" value="InterPro"/>
</dbReference>
<dbReference type="CDD" id="cd00290">
    <property type="entry name" value="cytochrome_b_C"/>
    <property type="match status" value="1"/>
</dbReference>
<dbReference type="CDD" id="cd00284">
    <property type="entry name" value="Cytochrome_b_N"/>
    <property type="match status" value="1"/>
</dbReference>
<dbReference type="FunFam" id="1.20.810.10:FF:000004">
    <property type="entry name" value="Cytochrome b"/>
    <property type="match status" value="1"/>
</dbReference>
<dbReference type="Gene3D" id="1.20.810.10">
    <property type="entry name" value="Cytochrome Bc1 Complex, Chain C"/>
    <property type="match status" value="1"/>
</dbReference>
<dbReference type="InterPro" id="IPR005798">
    <property type="entry name" value="Cyt_b/b6_C"/>
</dbReference>
<dbReference type="InterPro" id="IPR036150">
    <property type="entry name" value="Cyt_b/b6_C_sf"/>
</dbReference>
<dbReference type="InterPro" id="IPR005797">
    <property type="entry name" value="Cyt_b/b6_N"/>
</dbReference>
<dbReference type="InterPro" id="IPR027387">
    <property type="entry name" value="Cytb/b6-like_sf"/>
</dbReference>
<dbReference type="InterPro" id="IPR030689">
    <property type="entry name" value="Cytochrome_b"/>
</dbReference>
<dbReference type="InterPro" id="IPR048260">
    <property type="entry name" value="Cytochrome_b_C_euk/bac"/>
</dbReference>
<dbReference type="InterPro" id="IPR048259">
    <property type="entry name" value="Cytochrome_b_N_euk/bac"/>
</dbReference>
<dbReference type="InterPro" id="IPR016174">
    <property type="entry name" value="Di-haem_cyt_TM"/>
</dbReference>
<dbReference type="PANTHER" id="PTHR19271">
    <property type="entry name" value="CYTOCHROME B"/>
    <property type="match status" value="1"/>
</dbReference>
<dbReference type="PANTHER" id="PTHR19271:SF16">
    <property type="entry name" value="CYTOCHROME B"/>
    <property type="match status" value="1"/>
</dbReference>
<dbReference type="Pfam" id="PF00032">
    <property type="entry name" value="Cytochrom_B_C"/>
    <property type="match status" value="1"/>
</dbReference>
<dbReference type="Pfam" id="PF00033">
    <property type="entry name" value="Cytochrome_B"/>
    <property type="match status" value="1"/>
</dbReference>
<dbReference type="PIRSF" id="PIRSF038885">
    <property type="entry name" value="COB"/>
    <property type="match status" value="1"/>
</dbReference>
<dbReference type="SUPFAM" id="SSF81648">
    <property type="entry name" value="a domain/subunit of cytochrome bc1 complex (Ubiquinol-cytochrome c reductase)"/>
    <property type="match status" value="1"/>
</dbReference>
<dbReference type="SUPFAM" id="SSF81342">
    <property type="entry name" value="Transmembrane di-heme cytochromes"/>
    <property type="match status" value="1"/>
</dbReference>
<dbReference type="PROSITE" id="PS51003">
    <property type="entry name" value="CYTB_CTER"/>
    <property type="match status" value="1"/>
</dbReference>
<dbReference type="PROSITE" id="PS51002">
    <property type="entry name" value="CYTB_NTER"/>
    <property type="match status" value="1"/>
</dbReference>
<comment type="function">
    <text evidence="1">Component of the ubiquinol-cytochrome c reductase complex (complex III or cytochrome b-c1 complex), which is a respiratory chain that generates an electrochemical potential coupled to ATP synthesis.</text>
</comment>
<comment type="cofactor">
    <cofactor evidence="1">
        <name>heme b</name>
        <dbReference type="ChEBI" id="CHEBI:60344"/>
    </cofactor>
    <text evidence="1">Binds 2 heme b groups non-covalently.</text>
</comment>
<comment type="subunit">
    <text evidence="1">The main subunits of complex b-c1 are: cytochrome b, cytochrome c1 and the Rieske protein.</text>
</comment>
<comment type="subcellular location">
    <subcellularLocation>
        <location evidence="5">Cell membrane</location>
        <topology evidence="5">Multi-pass membrane protein</topology>
    </subcellularLocation>
</comment>
<comment type="miscellaneous">
    <text evidence="1">Heme 1 (or BL or b562) is low-potential and absorbs at about 562 nm, and heme 2 (or BH or b566) is high-potential and absorbs at about 566 nm.</text>
</comment>
<comment type="similarity">
    <text evidence="3 4">Belongs to the cytochrome b family.</text>
</comment>
<protein>
    <recommendedName>
        <fullName>Cytochrome b</fullName>
    </recommendedName>
</protein>
<accession>O54070</accession>
<proteinExistence type="inferred from homology"/>
<sequence>MNKEIIHKKSNGIIEWIDYRLPIFSFLKHFSYYQTPKNLNYLWNLGSIAGIALVIQIITGVILAMHYTPHVDHAFESVERIMRNVNYGWLLRYTHAVGASMFFAAIYLHIARGLYYGSYKTPRELLWHIGIIIFLIMMATAFMGYVLPWGQMSYWGATVITNLFSAIPLVGEPIVIWLWGGFSVDNPTLNRFFALHYLFPFIIVVLVILHLVALHQHGSNNPKGIDVKSTKDTIPFHPYYTVKDFVGFGVYFIIFAYFIFYAPNYLGHPDNYIPANPLVTPAHIVPEWYFLPFYAILRAVPSKLGGVFLMFGSIVVLFLLPWLDTSKIRSGNYRPIYRIAFWIFMADCLFLGYLGSKPVSEPYITISRFAVCYYFCHFLLVLPLIGKYEKPLPLPKVL</sequence>
<reference key="1">
    <citation type="submission" date="1997-06" db="EMBL/GenBank/DDBJ databases">
        <authorList>
            <person name="Sicheritz T."/>
            <person name="Kurland C.G."/>
            <person name="Andersson S.G.E."/>
        </authorList>
    </citation>
    <scope>NUCLEOTIDE SEQUENCE [GENOMIC DNA]</scope>
    <source>
        <strain>Madrid E</strain>
    </source>
</reference>
<reference key="2">
    <citation type="journal article" date="1998" name="Nature">
        <title>The genome sequence of Rickettsia prowazekii and the origin of mitochondria.</title>
        <authorList>
            <person name="Andersson S.G.E."/>
            <person name="Zomorodipour A."/>
            <person name="Andersson J.O."/>
            <person name="Sicheritz-Ponten T."/>
            <person name="Alsmark U.C.M."/>
            <person name="Podowski R.M."/>
            <person name="Naeslund A.K."/>
            <person name="Eriksson A.-S."/>
            <person name="Winkler H.H."/>
            <person name="Kurland C.G."/>
        </authorList>
    </citation>
    <scope>NUCLEOTIDE SEQUENCE [LARGE SCALE GENOMIC DNA]</scope>
    <source>
        <strain>Madrid E</strain>
    </source>
</reference>
<evidence type="ECO:0000250" key="1"/>
<evidence type="ECO:0000255" key="2"/>
<evidence type="ECO:0000255" key="3">
    <source>
        <dbReference type="PROSITE-ProRule" id="PRU00967"/>
    </source>
</evidence>
<evidence type="ECO:0000255" key="4">
    <source>
        <dbReference type="PROSITE-ProRule" id="PRU00968"/>
    </source>
</evidence>
<evidence type="ECO:0000305" key="5"/>
<organism>
    <name type="scientific">Rickettsia prowazekii (strain Madrid E)</name>
    <dbReference type="NCBI Taxonomy" id="272947"/>
    <lineage>
        <taxon>Bacteria</taxon>
        <taxon>Pseudomonadati</taxon>
        <taxon>Pseudomonadota</taxon>
        <taxon>Alphaproteobacteria</taxon>
        <taxon>Rickettsiales</taxon>
        <taxon>Rickettsiaceae</taxon>
        <taxon>Rickettsieae</taxon>
        <taxon>Rickettsia</taxon>
        <taxon>typhus group</taxon>
    </lineage>
</organism>